<comment type="catalytic activity">
    <reaction evidence="1">
        <text>beta-D-fructose 1,6-bisphosphate + H2O = beta-D-fructose 6-phosphate + phosphate</text>
        <dbReference type="Rhea" id="RHEA:11064"/>
        <dbReference type="ChEBI" id="CHEBI:15377"/>
        <dbReference type="ChEBI" id="CHEBI:32966"/>
        <dbReference type="ChEBI" id="CHEBI:43474"/>
        <dbReference type="ChEBI" id="CHEBI:57634"/>
        <dbReference type="EC" id="3.1.3.11"/>
    </reaction>
</comment>
<comment type="cofactor">
    <cofactor evidence="1">
        <name>Mg(2+)</name>
        <dbReference type="ChEBI" id="CHEBI:18420"/>
    </cofactor>
    <text evidence="1">Binds 2 magnesium ions per subunit.</text>
</comment>
<comment type="pathway">
    <text evidence="1">Carbohydrate biosynthesis; gluconeogenesis.</text>
</comment>
<comment type="subunit">
    <text evidence="1">Homotetramer.</text>
</comment>
<comment type="subcellular location">
    <subcellularLocation>
        <location evidence="1">Cytoplasm</location>
    </subcellularLocation>
</comment>
<comment type="similarity">
    <text evidence="1">Belongs to the FBPase class 1 family.</text>
</comment>
<feature type="chain" id="PRO_0000364637" description="Fructose-1,6-bisphosphatase class 1 1">
    <location>
        <begin position="1"/>
        <end position="322"/>
    </location>
</feature>
<feature type="binding site" evidence="1">
    <location>
        <position position="84"/>
    </location>
    <ligand>
        <name>Mg(2+)</name>
        <dbReference type="ChEBI" id="CHEBI:18420"/>
        <label>1</label>
    </ligand>
</feature>
<feature type="binding site" evidence="1">
    <location>
        <position position="103"/>
    </location>
    <ligand>
        <name>Mg(2+)</name>
        <dbReference type="ChEBI" id="CHEBI:18420"/>
        <label>1</label>
    </ligand>
</feature>
<feature type="binding site" evidence="1">
    <location>
        <position position="103"/>
    </location>
    <ligand>
        <name>Mg(2+)</name>
        <dbReference type="ChEBI" id="CHEBI:18420"/>
        <label>2</label>
    </ligand>
</feature>
<feature type="binding site" evidence="1">
    <location>
        <position position="105"/>
    </location>
    <ligand>
        <name>Mg(2+)</name>
        <dbReference type="ChEBI" id="CHEBI:18420"/>
        <label>1</label>
    </ligand>
</feature>
<feature type="binding site" evidence="1">
    <location>
        <begin position="106"/>
        <end position="109"/>
    </location>
    <ligand>
        <name>substrate</name>
    </ligand>
</feature>
<feature type="binding site" evidence="1">
    <location>
        <position position="106"/>
    </location>
    <ligand>
        <name>Mg(2+)</name>
        <dbReference type="ChEBI" id="CHEBI:18420"/>
        <label>2</label>
    </ligand>
</feature>
<feature type="binding site" evidence="1">
    <location>
        <position position="198"/>
    </location>
    <ligand>
        <name>substrate</name>
    </ligand>
</feature>
<feature type="binding site" evidence="1">
    <location>
        <position position="264"/>
    </location>
    <ligand>
        <name>substrate</name>
    </ligand>
</feature>
<feature type="binding site" evidence="1">
    <location>
        <position position="270"/>
    </location>
    <ligand>
        <name>Mg(2+)</name>
        <dbReference type="ChEBI" id="CHEBI:18420"/>
        <label>2</label>
    </ligand>
</feature>
<keyword id="KW-0119">Carbohydrate metabolism</keyword>
<keyword id="KW-0963">Cytoplasm</keyword>
<keyword id="KW-0378">Hydrolase</keyword>
<keyword id="KW-0460">Magnesium</keyword>
<keyword id="KW-0479">Metal-binding</keyword>
<keyword id="KW-1185">Reference proteome</keyword>
<proteinExistence type="inferred from homology"/>
<dbReference type="EC" id="3.1.3.11" evidence="1"/>
<dbReference type="EMBL" id="CR954246">
    <property type="protein sequence ID" value="CAI85560.1"/>
    <property type="molecule type" value="Genomic_DNA"/>
</dbReference>
<dbReference type="SMR" id="Q3IFQ5"/>
<dbReference type="STRING" id="326442.PSHAa0463"/>
<dbReference type="KEGG" id="pha:PSHAa0463"/>
<dbReference type="eggNOG" id="COG0158">
    <property type="taxonomic scope" value="Bacteria"/>
</dbReference>
<dbReference type="HOGENOM" id="CLU_039977_0_0_6"/>
<dbReference type="BioCyc" id="PHAL326442:PSHA_RS02245-MONOMER"/>
<dbReference type="UniPathway" id="UPA00138"/>
<dbReference type="Proteomes" id="UP000006843">
    <property type="component" value="Chromosome I"/>
</dbReference>
<dbReference type="GO" id="GO:0005829">
    <property type="term" value="C:cytosol"/>
    <property type="evidence" value="ECO:0007669"/>
    <property type="project" value="TreeGrafter"/>
</dbReference>
<dbReference type="GO" id="GO:0042132">
    <property type="term" value="F:fructose 1,6-bisphosphate 1-phosphatase activity"/>
    <property type="evidence" value="ECO:0007669"/>
    <property type="project" value="UniProtKB-UniRule"/>
</dbReference>
<dbReference type="GO" id="GO:0000287">
    <property type="term" value="F:magnesium ion binding"/>
    <property type="evidence" value="ECO:0007669"/>
    <property type="project" value="UniProtKB-UniRule"/>
</dbReference>
<dbReference type="GO" id="GO:0030388">
    <property type="term" value="P:fructose 1,6-bisphosphate metabolic process"/>
    <property type="evidence" value="ECO:0007669"/>
    <property type="project" value="TreeGrafter"/>
</dbReference>
<dbReference type="GO" id="GO:0006002">
    <property type="term" value="P:fructose 6-phosphate metabolic process"/>
    <property type="evidence" value="ECO:0007669"/>
    <property type="project" value="TreeGrafter"/>
</dbReference>
<dbReference type="GO" id="GO:0006000">
    <property type="term" value="P:fructose metabolic process"/>
    <property type="evidence" value="ECO:0007669"/>
    <property type="project" value="TreeGrafter"/>
</dbReference>
<dbReference type="GO" id="GO:0006094">
    <property type="term" value="P:gluconeogenesis"/>
    <property type="evidence" value="ECO:0007669"/>
    <property type="project" value="UniProtKB-UniRule"/>
</dbReference>
<dbReference type="GO" id="GO:0005986">
    <property type="term" value="P:sucrose biosynthetic process"/>
    <property type="evidence" value="ECO:0007669"/>
    <property type="project" value="TreeGrafter"/>
</dbReference>
<dbReference type="CDD" id="cd00354">
    <property type="entry name" value="FBPase"/>
    <property type="match status" value="1"/>
</dbReference>
<dbReference type="FunFam" id="3.40.190.80:FF:000011">
    <property type="entry name" value="Fructose-1,6-bisphosphatase class 1"/>
    <property type="match status" value="1"/>
</dbReference>
<dbReference type="Gene3D" id="3.40.190.80">
    <property type="match status" value="1"/>
</dbReference>
<dbReference type="Gene3D" id="3.30.540.10">
    <property type="entry name" value="Fructose-1,6-Bisphosphatase, subunit A, domain 1"/>
    <property type="match status" value="1"/>
</dbReference>
<dbReference type="HAMAP" id="MF_01855">
    <property type="entry name" value="FBPase_class1"/>
    <property type="match status" value="1"/>
</dbReference>
<dbReference type="InterPro" id="IPR044015">
    <property type="entry name" value="FBPase_C_dom"/>
</dbReference>
<dbReference type="InterPro" id="IPR000146">
    <property type="entry name" value="FBPase_class-1"/>
</dbReference>
<dbReference type="InterPro" id="IPR033391">
    <property type="entry name" value="FBPase_N"/>
</dbReference>
<dbReference type="InterPro" id="IPR028343">
    <property type="entry name" value="FBPtase"/>
</dbReference>
<dbReference type="NCBIfam" id="NF006779">
    <property type="entry name" value="PRK09293.1-3"/>
    <property type="match status" value="1"/>
</dbReference>
<dbReference type="NCBIfam" id="NF006780">
    <property type="entry name" value="PRK09293.1-4"/>
    <property type="match status" value="1"/>
</dbReference>
<dbReference type="PANTHER" id="PTHR11556">
    <property type="entry name" value="FRUCTOSE-1,6-BISPHOSPHATASE-RELATED"/>
    <property type="match status" value="1"/>
</dbReference>
<dbReference type="PANTHER" id="PTHR11556:SF35">
    <property type="entry name" value="SEDOHEPTULOSE-1,7-BISPHOSPHATASE, CHLOROPLASTIC"/>
    <property type="match status" value="1"/>
</dbReference>
<dbReference type="Pfam" id="PF00316">
    <property type="entry name" value="FBPase"/>
    <property type="match status" value="1"/>
</dbReference>
<dbReference type="Pfam" id="PF18913">
    <property type="entry name" value="FBPase_C"/>
    <property type="match status" value="1"/>
</dbReference>
<dbReference type="PIRSF" id="PIRSF500210">
    <property type="entry name" value="FBPtase"/>
    <property type="match status" value="1"/>
</dbReference>
<dbReference type="PIRSF" id="PIRSF000904">
    <property type="entry name" value="FBPtase_SBPase"/>
    <property type="match status" value="1"/>
</dbReference>
<dbReference type="PRINTS" id="PR00115">
    <property type="entry name" value="F16BPHPHTASE"/>
</dbReference>
<dbReference type="SUPFAM" id="SSF56655">
    <property type="entry name" value="Carbohydrate phosphatase"/>
    <property type="match status" value="1"/>
</dbReference>
<gene>
    <name evidence="1" type="primary">fbp1</name>
    <name type="ordered locus">PSHAa0463</name>
</gene>
<organism>
    <name type="scientific">Pseudoalteromonas translucida (strain TAC 125)</name>
    <dbReference type="NCBI Taxonomy" id="326442"/>
    <lineage>
        <taxon>Bacteria</taxon>
        <taxon>Pseudomonadati</taxon>
        <taxon>Pseudomonadota</taxon>
        <taxon>Gammaproteobacteria</taxon>
        <taxon>Alteromonadales</taxon>
        <taxon>Pseudoalteromonadaceae</taxon>
        <taxon>Pseudoalteromonas</taxon>
    </lineage>
</organism>
<sequence>MRRLPPVLLEDGCPRELISLIRTILAACKEISFRVGQGELSGVLGSTLDENIQGETQKKLDVLTNQLLKDILLESGYVKAIASEEEDYTVAGNPDAEYIVAFDPLDGSSNTDINSLVGTIFSVMKAPEGADPADQSIFMQPGINQVAAGYVLYGPSTILALTTGKGTRFFTLDKTHGTFLLTQDFAKIPADTNEYAINASNQRHWQPAMQNYINDLVAGDTGPRARNFNMRWIAAMVGDVHRVLSRGGLFTYPTDTKNPSQPNKLRLLYEANPMAMLVEQAGGIASTGTERIMDIQPNAIHQRVAVILGSKNEVETCLGYHK</sequence>
<evidence type="ECO:0000255" key="1">
    <source>
        <dbReference type="HAMAP-Rule" id="MF_01855"/>
    </source>
</evidence>
<reference key="1">
    <citation type="journal article" date="2005" name="Genome Res.">
        <title>Coping with cold: the genome of the versatile marine Antarctica bacterium Pseudoalteromonas haloplanktis TAC125.</title>
        <authorList>
            <person name="Medigue C."/>
            <person name="Krin E."/>
            <person name="Pascal G."/>
            <person name="Barbe V."/>
            <person name="Bernsel A."/>
            <person name="Bertin P.N."/>
            <person name="Cheung F."/>
            <person name="Cruveiller S."/>
            <person name="D'Amico S."/>
            <person name="Duilio A."/>
            <person name="Fang G."/>
            <person name="Feller G."/>
            <person name="Ho C."/>
            <person name="Mangenot S."/>
            <person name="Marino G."/>
            <person name="Nilsson J."/>
            <person name="Parrilli E."/>
            <person name="Rocha E.P.C."/>
            <person name="Rouy Z."/>
            <person name="Sekowska A."/>
            <person name="Tutino M.L."/>
            <person name="Vallenet D."/>
            <person name="von Heijne G."/>
            <person name="Danchin A."/>
        </authorList>
    </citation>
    <scope>NUCLEOTIDE SEQUENCE [LARGE SCALE GENOMIC DNA]</scope>
    <source>
        <strain>TAC 125</strain>
    </source>
</reference>
<protein>
    <recommendedName>
        <fullName evidence="1">Fructose-1,6-bisphosphatase class 1 1</fullName>
        <shortName evidence="1">FBPase class 1 1</shortName>
        <ecNumber evidence="1">3.1.3.11</ecNumber>
    </recommendedName>
    <alternativeName>
        <fullName evidence="1">D-fructose-1,6-bisphosphate 1-phosphohydrolase class 1 1</fullName>
    </alternativeName>
</protein>
<name>F16A1_PSET1</name>
<accession>Q3IFQ5</accession>